<sequence>MIRATIILAAVAALAFSAPVPEVPENYDDIPAEYKSLIPAEVSEHLKSITPEEKAILKEVAKGYKDFKSEDDFLNALKEKSPTLHEKASKLHQIVKDKVNALNDEAKAFVKKAIAEGRKIHAQYLAGEKPSLDTLKTTAKTHIEAYKGLSQDAKDSIAKEFPILTGFFKNEKVQAMVGQYLN</sequence>
<reference key="1">
    <citation type="journal article" date="1994" name="Nature">
        <title>2.2 Mb of contiguous nucleotide sequence from chromosome III of C. elegans.</title>
        <authorList>
            <person name="Wilson R."/>
            <person name="Ainscough R."/>
            <person name="Anderson K."/>
            <person name="Baynes C."/>
            <person name="Berks M."/>
            <person name="Bonfield J."/>
            <person name="Burton J."/>
            <person name="Connell M."/>
            <person name="Copsey T."/>
            <person name="Cooper J."/>
            <person name="Coulson A."/>
            <person name="Craxton M."/>
            <person name="Dear S."/>
            <person name="Du Z."/>
            <person name="Durbin R."/>
            <person name="Favello A."/>
            <person name="Fraser A."/>
            <person name="Fulton L."/>
            <person name="Gardner A."/>
            <person name="Green P."/>
            <person name="Hawkins T."/>
            <person name="Hillier L."/>
            <person name="Jier M."/>
            <person name="Johnston L."/>
            <person name="Jones M."/>
            <person name="Kershaw J."/>
            <person name="Kirsten J."/>
            <person name="Laisster N."/>
            <person name="Latreille P."/>
            <person name="Lightning J."/>
            <person name="Lloyd C."/>
            <person name="Mortimore B."/>
            <person name="O'Callaghan M."/>
            <person name="Parsons J."/>
            <person name="Percy C."/>
            <person name="Rifken L."/>
            <person name="Roopra A."/>
            <person name="Saunders D."/>
            <person name="Shownkeen R."/>
            <person name="Sims M."/>
            <person name="Smaldon N."/>
            <person name="Smith A."/>
            <person name="Smith M."/>
            <person name="Sonnhammer E."/>
            <person name="Staden R."/>
            <person name="Sulston J."/>
            <person name="Thierry-Mieg J."/>
            <person name="Thomas K."/>
            <person name="Vaudin M."/>
            <person name="Vaughan K."/>
            <person name="Waterston R."/>
            <person name="Watson A."/>
            <person name="Weinstock L."/>
            <person name="Wilkinson-Sproat J."/>
            <person name="Wohldman P."/>
        </authorList>
    </citation>
    <scope>NUCLEOTIDE SEQUENCE [LARGE SCALE GENOMIC DNA]</scope>
    <source>
        <strain>Bristol N2</strain>
    </source>
</reference>
<reference key="2">
    <citation type="journal article" date="1998" name="Science">
        <title>Genome sequence of the nematode C. elegans: a platform for investigating biology.</title>
        <authorList>
            <consortium name="The C. elegans sequencing consortium"/>
        </authorList>
    </citation>
    <scope>NUCLEOTIDE SEQUENCE [LARGE SCALE GENOMIC DNA]</scope>
    <source>
        <strain>Bristol N2</strain>
    </source>
</reference>
<evidence type="ECO:0000250" key="1"/>
<evidence type="ECO:0000255" key="2"/>
<evidence type="ECO:0000305" key="3"/>
<organism>
    <name type="scientific">Caenorhabditis elegans</name>
    <dbReference type="NCBI Taxonomy" id="6239"/>
    <lineage>
        <taxon>Eukaryota</taxon>
        <taxon>Metazoa</taxon>
        <taxon>Ecdysozoa</taxon>
        <taxon>Nematoda</taxon>
        <taxon>Chromadorea</taxon>
        <taxon>Rhabditida</taxon>
        <taxon>Rhabditina</taxon>
        <taxon>Rhabditomorpha</taxon>
        <taxon>Rhabditoidea</taxon>
        <taxon>Rhabditidae</taxon>
        <taxon>Peloderinae</taxon>
        <taxon>Caenorhabditis</taxon>
    </lineage>
</organism>
<gene>
    <name type="primary">far-1</name>
    <name type="ORF">F02A9.2</name>
</gene>
<name>FAR1_CAEEL</name>
<dbReference type="EMBL" id="Z19555">
    <property type="protein sequence ID" value="CAA79616.1"/>
    <property type="molecule type" value="Genomic_DNA"/>
</dbReference>
<dbReference type="PIR" id="S28310">
    <property type="entry name" value="S28310"/>
</dbReference>
<dbReference type="RefSeq" id="NP_001254978.1">
    <property type="nucleotide sequence ID" value="NM_001268049.4"/>
</dbReference>
<dbReference type="SMR" id="P34382"/>
<dbReference type="BioGRID" id="41482">
    <property type="interactions" value="7"/>
</dbReference>
<dbReference type="FunCoup" id="P34382">
    <property type="interactions" value="202"/>
</dbReference>
<dbReference type="STRING" id="6239.F02A9.2a.1"/>
<dbReference type="PaxDb" id="6239-F02A9.2a"/>
<dbReference type="PeptideAtlas" id="P34382"/>
<dbReference type="EnsemblMetazoa" id="F02A9.2.1">
    <property type="protein sequence ID" value="F02A9.2.1"/>
    <property type="gene ID" value="WBGene00001385"/>
</dbReference>
<dbReference type="GeneID" id="176283"/>
<dbReference type="KEGG" id="cel:CELE_F02A9.2"/>
<dbReference type="UCSC" id="F02A9.2.1">
    <property type="organism name" value="c. elegans"/>
</dbReference>
<dbReference type="AGR" id="WB:WBGene00001385"/>
<dbReference type="CTD" id="176283"/>
<dbReference type="WormBase" id="F02A9.2">
    <property type="protein sequence ID" value="CE00133"/>
    <property type="gene ID" value="WBGene00001385"/>
    <property type="gene designation" value="far-1"/>
</dbReference>
<dbReference type="eggNOG" id="ENOG502S5FJ">
    <property type="taxonomic scope" value="Eukaryota"/>
</dbReference>
<dbReference type="GeneTree" id="ENSGT00970000195891"/>
<dbReference type="HOGENOM" id="CLU_117803_0_0_1"/>
<dbReference type="InParanoid" id="P34382"/>
<dbReference type="OMA" id="RKIHAQY"/>
<dbReference type="OrthoDB" id="5808308at2759"/>
<dbReference type="PhylomeDB" id="P34382"/>
<dbReference type="PRO" id="PR:P34382"/>
<dbReference type="Proteomes" id="UP000001940">
    <property type="component" value="Chromosome III"/>
</dbReference>
<dbReference type="Bgee" id="WBGene00001385">
    <property type="expression patterns" value="Expressed in larva and 4 other cell types or tissues"/>
</dbReference>
<dbReference type="GO" id="GO:0005576">
    <property type="term" value="C:extracellular region"/>
    <property type="evidence" value="ECO:0007669"/>
    <property type="project" value="UniProtKB-SubCell"/>
</dbReference>
<dbReference type="GO" id="GO:0008289">
    <property type="term" value="F:lipid binding"/>
    <property type="evidence" value="ECO:0007669"/>
    <property type="project" value="UniProtKB-KW"/>
</dbReference>
<dbReference type="Gene3D" id="1.20.120.1100">
    <property type="match status" value="1"/>
</dbReference>
<dbReference type="InterPro" id="IPR008632">
    <property type="entry name" value="Gp-FAR-1"/>
</dbReference>
<dbReference type="PANTHER" id="PTHR31418">
    <property type="entry name" value="FATTY-ACID AND RETINOL-BINDING PROTEIN 1"/>
    <property type="match status" value="1"/>
</dbReference>
<dbReference type="PANTHER" id="PTHR31418:SF7">
    <property type="entry name" value="FATTY-ACID AND RETINOL-BINDING PROTEIN 1"/>
    <property type="match status" value="1"/>
</dbReference>
<dbReference type="Pfam" id="PF05823">
    <property type="entry name" value="Gp-FAR-1"/>
    <property type="match status" value="1"/>
</dbReference>
<protein>
    <recommendedName>
        <fullName>Fatty-acid and retinol-binding protein 1</fullName>
    </recommendedName>
</protein>
<keyword id="KW-0175">Coiled coil</keyword>
<keyword id="KW-0446">Lipid-binding</keyword>
<keyword id="KW-1185">Reference proteome</keyword>
<keyword id="KW-0964">Secreted</keyword>
<keyword id="KW-0732">Signal</keyword>
<proteinExistence type="inferred from homology"/>
<comment type="function">
    <text evidence="1">Probably binds lipids.</text>
</comment>
<comment type="subcellular location">
    <subcellularLocation>
        <location evidence="1">Secreted</location>
    </subcellularLocation>
</comment>
<comment type="similarity">
    <text evidence="3">Belongs to the fatty-acid and retinol-binding protein (FARBP) family.</text>
</comment>
<accession>P34382</accession>
<feature type="signal peptide" evidence="2">
    <location>
        <begin position="1"/>
        <end position="17"/>
    </location>
</feature>
<feature type="chain" id="PRO_0000008767" description="Fatty-acid and retinol-binding protein 1">
    <location>
        <begin position="18"/>
        <end position="182"/>
    </location>
</feature>
<feature type="coiled-coil region" evidence="2">
    <location>
        <begin position="86"/>
        <end position="106"/>
    </location>
</feature>